<reference key="1">
    <citation type="journal article" date="2005" name="BMC Biol.">
        <title>The sequence of rice chromosomes 11 and 12, rich in disease resistance genes and recent gene duplications.</title>
        <authorList>
            <consortium name="The rice chromosomes 11 and 12 sequencing consortia"/>
        </authorList>
    </citation>
    <scope>NUCLEOTIDE SEQUENCE [LARGE SCALE GENOMIC DNA]</scope>
    <source>
        <strain>cv. Nipponbare</strain>
    </source>
</reference>
<reference key="2">
    <citation type="journal article" date="2005" name="Nature">
        <title>The map-based sequence of the rice genome.</title>
        <authorList>
            <consortium name="International rice genome sequencing project (IRGSP)"/>
        </authorList>
    </citation>
    <scope>NUCLEOTIDE SEQUENCE [LARGE SCALE GENOMIC DNA]</scope>
    <source>
        <strain>cv. Nipponbare</strain>
    </source>
</reference>
<reference key="3">
    <citation type="journal article" date="2008" name="Nucleic Acids Res.">
        <title>The rice annotation project database (RAP-DB): 2008 update.</title>
        <authorList>
            <consortium name="The rice annotation project (RAP)"/>
        </authorList>
    </citation>
    <scope>GENOME REANNOTATION</scope>
    <source>
        <strain>cv. Nipponbare</strain>
    </source>
</reference>
<reference key="4">
    <citation type="journal article" date="2013" name="Rice">
        <title>Improvement of the Oryza sativa Nipponbare reference genome using next generation sequence and optical map data.</title>
        <authorList>
            <person name="Kawahara Y."/>
            <person name="de la Bastide M."/>
            <person name="Hamilton J.P."/>
            <person name="Kanamori H."/>
            <person name="McCombie W.R."/>
            <person name="Ouyang S."/>
            <person name="Schwartz D.C."/>
            <person name="Tanaka T."/>
            <person name="Wu J."/>
            <person name="Zhou S."/>
            <person name="Childs K.L."/>
            <person name="Davidson R.M."/>
            <person name="Lin H."/>
            <person name="Quesada-Ocampo L."/>
            <person name="Vaillancourt B."/>
            <person name="Sakai H."/>
            <person name="Lee S.S."/>
            <person name="Kim J."/>
            <person name="Numa H."/>
            <person name="Itoh T."/>
            <person name="Buell C.R."/>
            <person name="Matsumoto T."/>
        </authorList>
    </citation>
    <scope>GENOME REANNOTATION</scope>
    <source>
        <strain>cv. Nipponbare</strain>
    </source>
</reference>
<reference key="5">
    <citation type="journal article" date="2005" name="PLoS Biol.">
        <title>The genomes of Oryza sativa: a history of duplications.</title>
        <authorList>
            <person name="Yu J."/>
            <person name="Wang J."/>
            <person name="Lin W."/>
            <person name="Li S."/>
            <person name="Li H."/>
            <person name="Zhou J."/>
            <person name="Ni P."/>
            <person name="Dong W."/>
            <person name="Hu S."/>
            <person name="Zeng C."/>
            <person name="Zhang J."/>
            <person name="Zhang Y."/>
            <person name="Li R."/>
            <person name="Xu Z."/>
            <person name="Li S."/>
            <person name="Li X."/>
            <person name="Zheng H."/>
            <person name="Cong L."/>
            <person name="Lin L."/>
            <person name="Yin J."/>
            <person name="Geng J."/>
            <person name="Li G."/>
            <person name="Shi J."/>
            <person name="Liu J."/>
            <person name="Lv H."/>
            <person name="Li J."/>
            <person name="Wang J."/>
            <person name="Deng Y."/>
            <person name="Ran L."/>
            <person name="Shi X."/>
            <person name="Wang X."/>
            <person name="Wu Q."/>
            <person name="Li C."/>
            <person name="Ren X."/>
            <person name="Wang J."/>
            <person name="Wang X."/>
            <person name="Li D."/>
            <person name="Liu D."/>
            <person name="Zhang X."/>
            <person name="Ji Z."/>
            <person name="Zhao W."/>
            <person name="Sun Y."/>
            <person name="Zhang Z."/>
            <person name="Bao J."/>
            <person name="Han Y."/>
            <person name="Dong L."/>
            <person name="Ji J."/>
            <person name="Chen P."/>
            <person name="Wu S."/>
            <person name="Liu J."/>
            <person name="Xiao Y."/>
            <person name="Bu D."/>
            <person name="Tan J."/>
            <person name="Yang L."/>
            <person name="Ye C."/>
            <person name="Zhang J."/>
            <person name="Xu J."/>
            <person name="Zhou Y."/>
            <person name="Yu Y."/>
            <person name="Zhang B."/>
            <person name="Zhuang S."/>
            <person name="Wei H."/>
            <person name="Liu B."/>
            <person name="Lei M."/>
            <person name="Yu H."/>
            <person name="Li Y."/>
            <person name="Xu H."/>
            <person name="Wei S."/>
            <person name="He X."/>
            <person name="Fang L."/>
            <person name="Zhang Z."/>
            <person name="Zhang Y."/>
            <person name="Huang X."/>
            <person name="Su Z."/>
            <person name="Tong W."/>
            <person name="Li J."/>
            <person name="Tong Z."/>
            <person name="Li S."/>
            <person name="Ye J."/>
            <person name="Wang L."/>
            <person name="Fang L."/>
            <person name="Lei T."/>
            <person name="Chen C.-S."/>
            <person name="Chen H.-C."/>
            <person name="Xu Z."/>
            <person name="Li H."/>
            <person name="Huang H."/>
            <person name="Zhang F."/>
            <person name="Xu H."/>
            <person name="Li N."/>
            <person name="Zhao C."/>
            <person name="Li S."/>
            <person name="Dong L."/>
            <person name="Huang Y."/>
            <person name="Li L."/>
            <person name="Xi Y."/>
            <person name="Qi Q."/>
            <person name="Li W."/>
            <person name="Zhang B."/>
            <person name="Hu W."/>
            <person name="Zhang Y."/>
            <person name="Tian X."/>
            <person name="Jiao Y."/>
            <person name="Liang X."/>
            <person name="Jin J."/>
            <person name="Gao L."/>
            <person name="Zheng W."/>
            <person name="Hao B."/>
            <person name="Liu S.-M."/>
            <person name="Wang W."/>
            <person name="Yuan L."/>
            <person name="Cao M."/>
            <person name="McDermott J."/>
            <person name="Samudrala R."/>
            <person name="Wang J."/>
            <person name="Wong G.K.-S."/>
            <person name="Yang H."/>
        </authorList>
    </citation>
    <scope>NUCLEOTIDE SEQUENCE [LARGE SCALE GENOMIC DNA]</scope>
    <source>
        <strain>cv. Nipponbare</strain>
    </source>
</reference>
<reference key="6">
    <citation type="journal article" date="2003" name="Science">
        <title>Collection, mapping, and annotation of over 28,000 cDNA clones from japonica rice.</title>
        <authorList>
            <consortium name="The rice full-length cDNA consortium"/>
        </authorList>
    </citation>
    <scope>NUCLEOTIDE SEQUENCE [LARGE SCALE MRNA]</scope>
    <source>
        <strain>cv. Nipponbare</strain>
    </source>
</reference>
<reference key="7">
    <citation type="journal article" date="2020" name="Plant J.">
        <title>OsLFR is essential for early endosperm and embryo development by interacting with SWI/SNF complex members in Oryza sativa.</title>
        <authorList>
            <person name="Qi D."/>
            <person name="Wen Q."/>
            <person name="Meng Z."/>
            <person name="Yuan S."/>
            <person name="Guo H."/>
            <person name="Zhao H."/>
            <person name="Cui S."/>
        </authorList>
    </citation>
    <scope>INTERACTION WITH LFR</scope>
    <scope>SUBCELLULAR LOCATION</scope>
</reference>
<reference key="8">
    <citation type="journal article" date="2020" name="New Phytol.">
        <title>A lamin-like protein OsNMCP1 regulates drought resistance and root growth through chromatin accessibility modulation by interacting with a chromatin remodeller OsSWI3C in rice.</title>
        <authorList>
            <person name="Yang J."/>
            <person name="Chang Y."/>
            <person name="Qin Y."/>
            <person name="Chen D."/>
            <person name="Zhu T."/>
            <person name="Peng K."/>
            <person name="Wang H."/>
            <person name="Tang N."/>
            <person name="Li X."/>
            <person name="Wang Y."/>
            <person name="Liu Y."/>
            <person name="Li X."/>
            <person name="Xie W."/>
            <person name="Xiong L."/>
        </authorList>
    </citation>
    <scope>FUNCTION</scope>
    <scope>INTERACTION WITH NMCP1</scope>
    <scope>SUBCELLULAR LOCATION</scope>
</reference>
<feature type="chain" id="PRO_0000452397" description="SWI/SNF complex subunit SWI3C homolog">
    <location>
        <begin position="1"/>
        <end position="784"/>
    </location>
</feature>
<feature type="domain" description="SWIRM" evidence="3">
    <location>
        <begin position="185"/>
        <end position="284"/>
    </location>
</feature>
<feature type="domain" description="SANT" evidence="4">
    <location>
        <begin position="413"/>
        <end position="464"/>
    </location>
</feature>
<feature type="zinc finger region" description="ZZ-type; degenerate" evidence="2">
    <location>
        <begin position="355"/>
        <end position="409"/>
    </location>
</feature>
<feature type="region of interest" description="Disordered" evidence="5">
    <location>
        <begin position="1"/>
        <end position="68"/>
    </location>
</feature>
<feature type="region of interest" description="Disordered" evidence="5">
    <location>
        <begin position="667"/>
        <end position="702"/>
    </location>
</feature>
<feature type="region of interest" description="Disordered" evidence="5">
    <location>
        <begin position="760"/>
        <end position="784"/>
    </location>
</feature>
<feature type="compositionally biased region" description="Polar residues" evidence="5">
    <location>
        <begin position="1"/>
        <end position="10"/>
    </location>
</feature>
<feature type="compositionally biased region" description="Low complexity" evidence="5">
    <location>
        <begin position="24"/>
        <end position="39"/>
    </location>
</feature>
<feature type="compositionally biased region" description="Acidic residues" evidence="5">
    <location>
        <begin position="43"/>
        <end position="66"/>
    </location>
</feature>
<feature type="compositionally biased region" description="Low complexity" evidence="5">
    <location>
        <begin position="675"/>
        <end position="695"/>
    </location>
</feature>
<feature type="binding site" evidence="2">
    <location>
        <position position="360"/>
    </location>
    <ligand>
        <name>Zn(2+)</name>
        <dbReference type="ChEBI" id="CHEBI:29105"/>
    </ligand>
</feature>
<feature type="binding site" evidence="2">
    <location>
        <position position="363"/>
    </location>
    <ligand>
        <name>Zn(2+)</name>
        <dbReference type="ChEBI" id="CHEBI:29105"/>
    </ligand>
</feature>
<feature type="binding site" evidence="2">
    <location>
        <position position="383"/>
    </location>
    <ligand>
        <name>Zn(2+)</name>
        <dbReference type="ChEBI" id="CHEBI:29105"/>
    </ligand>
</feature>
<feature type="binding site" evidence="2">
    <location>
        <position position="386"/>
    </location>
    <ligand>
        <name>Zn(2+)</name>
        <dbReference type="ChEBI" id="CHEBI:29105"/>
    </ligand>
</feature>
<feature type="sequence conflict" description="In Ref. 5; EEE51768." evidence="10" ref="5">
    <original>D</original>
    <variation>E</variation>
    <location>
        <position position="40"/>
    </location>
</feature>
<proteinExistence type="evidence at protein level"/>
<protein>
    <recommendedName>
        <fullName evidence="10">SWI/SNF complex subunit SWI3C homolog</fullName>
        <shortName evidence="8">OsSWI3C</shortName>
    </recommendedName>
    <alternativeName>
        <fullName evidence="9">OsSWI3C1</fullName>
    </alternativeName>
    <alternativeName>
        <fullName evidence="10">Transcription regulatory protein SWI3C homolog</fullName>
    </alternativeName>
</protein>
<sequence length="784" mass="85063">MPRKASSTSDSRLKWRKWKRNPTASPSPSNRSSAAAAAADHSDDSDSAAVNEDDDSAVPEDADDETLAGAEDPVLDLREAEVLPSAEPVSAFPVATRRVVNRPHPSVLAVIAAERSACAGEGSAAVAAAPVLENISYGQQQVLSGVLPDHASLATDTDKPSTYVCTPPNLMEGHGVTKQFQGRLHVVPKHSDWFSPGIVHRLERQVVPQFFSGKSPGNTPEKYMLLRNKVIAKYLENPSKRLAFAECQGLVANTAELYDLSRIVRFLDTWGIINYLASGSVHRGLRMATSLLREEPTGELQLLTAPLKSIDGLILFDRPKCNLQAEDISSLASNSEVVDFDAGLAELDGKIRERLSESSCSYCLQPLTSLHYQSLKEADIALCSDCFHDARYITGHSSLDFQRIDGDNDRSENDGDSWTDQETLLLLEGIEKYNDNWNNIAEHVGTKSKAQCIYHFIRLPVEDGLLENIEVPDASVPFRAETNGYPHLDCNGSTSGNLPQKIPPDNQLPFINSSNPVMSLVGFLASAMGPRVAASCASAALSVLTVDDDSRVNSEGICSDSRGQGPHPNFRDHNGGVSSSISPEKVKHAAMCGLSAAATKAKLFADQEEREIQRLTATVINHQLKRLELKLKQFAEVETLLLKECEQVERIRQRIASDRVRIVSTRLASPGNSLPGGSTSTMSSNPMSMSPRPMGVPGSMPQSSMPAPFANNMQGHGHPQMAFLQQQQRQQMLSFGPRLPLSAIQTQPSPQTSNIMFNPGMPNSVTPNHHQLLRSSSGNNSSVG</sequence>
<name>SWI3C_ORYSJ</name>
<organism>
    <name type="scientific">Oryza sativa subsp. japonica</name>
    <name type="common">Rice</name>
    <dbReference type="NCBI Taxonomy" id="39947"/>
    <lineage>
        <taxon>Eukaryota</taxon>
        <taxon>Viridiplantae</taxon>
        <taxon>Streptophyta</taxon>
        <taxon>Embryophyta</taxon>
        <taxon>Tracheophyta</taxon>
        <taxon>Spermatophyta</taxon>
        <taxon>Magnoliopsida</taxon>
        <taxon>Liliopsida</taxon>
        <taxon>Poales</taxon>
        <taxon>Poaceae</taxon>
        <taxon>BOP clade</taxon>
        <taxon>Oryzoideae</taxon>
        <taxon>Oryzeae</taxon>
        <taxon>Oryzinae</taxon>
        <taxon>Oryza</taxon>
        <taxon>Oryza sativa</taxon>
    </lineage>
</organism>
<evidence type="ECO:0000250" key="1">
    <source>
        <dbReference type="UniProtKB" id="Q9XI07"/>
    </source>
</evidence>
<evidence type="ECO:0000255" key="2">
    <source>
        <dbReference type="PROSITE-ProRule" id="PRU00228"/>
    </source>
</evidence>
<evidence type="ECO:0000255" key="3">
    <source>
        <dbReference type="PROSITE-ProRule" id="PRU00247"/>
    </source>
</evidence>
<evidence type="ECO:0000255" key="4">
    <source>
        <dbReference type="PROSITE-ProRule" id="PRU00624"/>
    </source>
</evidence>
<evidence type="ECO:0000256" key="5">
    <source>
        <dbReference type="SAM" id="MobiDB-lite"/>
    </source>
</evidence>
<evidence type="ECO:0000269" key="6">
    <source>
    </source>
</evidence>
<evidence type="ECO:0000269" key="7">
    <source>
    </source>
</evidence>
<evidence type="ECO:0000303" key="8">
    <source>
    </source>
</evidence>
<evidence type="ECO:0000303" key="9">
    <source>
    </source>
</evidence>
<evidence type="ECO:0000305" key="10"/>
<evidence type="ECO:0000312" key="11">
    <source>
        <dbReference type="EMBL" id="ABA91812.1"/>
    </source>
</evidence>
<evidence type="ECO:0000312" key="12">
    <source>
        <dbReference type="EMBL" id="BAT12964.1"/>
    </source>
</evidence>
<evidence type="ECO:0000312" key="13">
    <source>
        <dbReference type="EMBL" id="EEE51768.1"/>
    </source>
</evidence>
<gene>
    <name evidence="8" type="primary">SWI3C</name>
    <name evidence="10" type="synonym">CHB705</name>
    <name evidence="9" type="synonym">SWI3C1</name>
    <name evidence="12" type="ordered locus">Os11g0183700</name>
    <name evidence="11" type="ordered locus">LOC_Os11g08080</name>
    <name evidence="13" type="ORF">OsJ_33208</name>
</gene>
<accession>Q53KK6</accession>
<accession>B9G9R2</accession>
<accession>Q0IU59</accession>
<keyword id="KW-0156">Chromatin regulator</keyword>
<keyword id="KW-0238">DNA-binding</keyword>
<keyword id="KW-0479">Metal-binding</keyword>
<keyword id="KW-0539">Nucleus</keyword>
<keyword id="KW-1185">Reference proteome</keyword>
<keyword id="KW-0346">Stress response</keyword>
<keyword id="KW-0804">Transcription</keyword>
<keyword id="KW-0805">Transcription regulation</keyword>
<keyword id="KW-0862">Zinc</keyword>
<keyword id="KW-0863">Zinc-finger</keyword>
<comment type="function">
    <text evidence="1 6">Component of a multiprotein complex equivalent of the SWI/SNF complex, an ATP-dependent chromatin-remodeling complex, which is required for the positive and negative regulation of gene expression of a large number of genes. It changes chromatin structure by altering DNA-histone contacts within a nucleosome, leading eventually to a change in nucleosome position, thus facilitating or repressing binding of gene-specific transcription factors (By similarity). May be involved in positive response to drought stress and modulation of root growth through its interaction with NMCP1 (PubMed:32129897).</text>
</comment>
<comment type="subunit">
    <text evidence="6 7">Interacts with LFR (PubMed:32808364). Interacts with NMCP1 (PubMed:32129897).</text>
</comment>
<comment type="subcellular location">
    <subcellularLocation>
        <location evidence="4 6 7">Nucleus</location>
    </subcellularLocation>
    <subcellularLocation>
        <location evidence="6">Nucleus</location>
        <location evidence="6">Nucleoplasm</location>
    </subcellularLocation>
</comment>
<comment type="miscellaneous">
    <text evidence="6">Plants overexpressing SWIC3 are hypersensitive to drought stress.</text>
</comment>
<dbReference type="EMBL" id="AC146328">
    <property type="protein sequence ID" value="AAX95027.1"/>
    <property type="molecule type" value="Genomic_DNA"/>
</dbReference>
<dbReference type="EMBL" id="DP000010">
    <property type="protein sequence ID" value="ABA91812.1"/>
    <property type="molecule type" value="Genomic_DNA"/>
</dbReference>
<dbReference type="EMBL" id="AP008217">
    <property type="protein sequence ID" value="BAF27756.1"/>
    <property type="molecule type" value="Genomic_DNA"/>
</dbReference>
<dbReference type="EMBL" id="AP014967">
    <property type="protein sequence ID" value="BAT12964.1"/>
    <property type="molecule type" value="Genomic_DNA"/>
</dbReference>
<dbReference type="EMBL" id="CM000148">
    <property type="protein sequence ID" value="EEE51768.1"/>
    <property type="molecule type" value="Genomic_DNA"/>
</dbReference>
<dbReference type="EMBL" id="AK066941">
    <property type="protein sequence ID" value="BAG90191.1"/>
    <property type="molecule type" value="mRNA"/>
</dbReference>
<dbReference type="RefSeq" id="XP_015617508.1">
    <property type="nucleotide sequence ID" value="XM_015762022.1"/>
</dbReference>
<dbReference type="FunCoup" id="Q53KK6">
    <property type="interactions" value="641"/>
</dbReference>
<dbReference type="STRING" id="39947.Q53KK6"/>
<dbReference type="PaxDb" id="39947-Q53KK6"/>
<dbReference type="EnsemblPlants" id="Os11t0183700-01">
    <property type="protein sequence ID" value="Os11t0183700-01"/>
    <property type="gene ID" value="Os11g0183700"/>
</dbReference>
<dbReference type="Gramene" id="Os11t0183700-01">
    <property type="protein sequence ID" value="Os11t0183700-01"/>
    <property type="gene ID" value="Os11g0183700"/>
</dbReference>
<dbReference type="KEGG" id="dosa:Os11g0183700"/>
<dbReference type="eggNOG" id="KOG1279">
    <property type="taxonomic scope" value="Eukaryota"/>
</dbReference>
<dbReference type="HOGENOM" id="CLU_004447_4_1_1"/>
<dbReference type="InParanoid" id="Q53KK6"/>
<dbReference type="OMA" id="DCFHHGR"/>
<dbReference type="OrthoDB" id="118550at2759"/>
<dbReference type="Proteomes" id="UP000000763">
    <property type="component" value="Chromosome 11"/>
</dbReference>
<dbReference type="Proteomes" id="UP000007752">
    <property type="component" value="Chromosome 11"/>
</dbReference>
<dbReference type="Proteomes" id="UP000059680">
    <property type="component" value="Chromosome 11"/>
</dbReference>
<dbReference type="ExpressionAtlas" id="Q53KK6">
    <property type="expression patterns" value="baseline and differential"/>
</dbReference>
<dbReference type="GO" id="GO:0005654">
    <property type="term" value="C:nucleoplasm"/>
    <property type="evidence" value="ECO:0000314"/>
    <property type="project" value="UniProtKB"/>
</dbReference>
<dbReference type="GO" id="GO:0005634">
    <property type="term" value="C:nucleus"/>
    <property type="evidence" value="ECO:0000314"/>
    <property type="project" value="UniProtKB"/>
</dbReference>
<dbReference type="GO" id="GO:0003677">
    <property type="term" value="F:DNA binding"/>
    <property type="evidence" value="ECO:0007669"/>
    <property type="project" value="UniProtKB-KW"/>
</dbReference>
<dbReference type="GO" id="GO:0008270">
    <property type="term" value="F:zinc ion binding"/>
    <property type="evidence" value="ECO:0007669"/>
    <property type="project" value="UniProtKB-KW"/>
</dbReference>
<dbReference type="GO" id="GO:0006325">
    <property type="term" value="P:chromatin organization"/>
    <property type="evidence" value="ECO:0007669"/>
    <property type="project" value="UniProtKB-KW"/>
</dbReference>
<dbReference type="GO" id="GO:2000070">
    <property type="term" value="P:regulation of response to water deprivation"/>
    <property type="evidence" value="ECO:0000315"/>
    <property type="project" value="UniProtKB"/>
</dbReference>
<dbReference type="CDD" id="cd00167">
    <property type="entry name" value="SANT"/>
    <property type="match status" value="1"/>
</dbReference>
<dbReference type="FunFam" id="1.10.10.60:FF:000014">
    <property type="entry name" value="SWI/SNF complex subunit SMARCC2 isoform C"/>
    <property type="match status" value="1"/>
</dbReference>
<dbReference type="Gene3D" id="1.10.10.60">
    <property type="entry name" value="Homeodomain-like"/>
    <property type="match status" value="1"/>
</dbReference>
<dbReference type="Gene3D" id="1.10.10.10">
    <property type="entry name" value="Winged helix-like DNA-binding domain superfamily/Winged helix DNA-binding domain"/>
    <property type="match status" value="1"/>
</dbReference>
<dbReference type="InterPro" id="IPR009057">
    <property type="entry name" value="Homeodomain-like_sf"/>
</dbReference>
<dbReference type="InterPro" id="IPR001005">
    <property type="entry name" value="SANT/Myb"/>
</dbReference>
<dbReference type="InterPro" id="IPR017884">
    <property type="entry name" value="SANT_dom"/>
</dbReference>
<dbReference type="InterPro" id="IPR032451">
    <property type="entry name" value="SMARCC_C"/>
</dbReference>
<dbReference type="InterPro" id="IPR007526">
    <property type="entry name" value="SWIRM"/>
</dbReference>
<dbReference type="InterPro" id="IPR036388">
    <property type="entry name" value="WH-like_DNA-bd_sf"/>
</dbReference>
<dbReference type="InterPro" id="IPR000433">
    <property type="entry name" value="Znf_ZZ"/>
</dbReference>
<dbReference type="PANTHER" id="PTHR12802">
    <property type="entry name" value="SWI/SNF COMPLEX-RELATED"/>
    <property type="match status" value="1"/>
</dbReference>
<dbReference type="PANTHER" id="PTHR12802:SF61">
    <property type="entry name" value="SWI_SNF COMPLEX SUBUNIT SWI3C"/>
    <property type="match status" value="1"/>
</dbReference>
<dbReference type="Pfam" id="PF00249">
    <property type="entry name" value="Myb_DNA-binding"/>
    <property type="match status" value="1"/>
</dbReference>
<dbReference type="Pfam" id="PF04433">
    <property type="entry name" value="SWIRM"/>
    <property type="match status" value="1"/>
</dbReference>
<dbReference type="Pfam" id="PF16495">
    <property type="entry name" value="SWIRM-assoc_1"/>
    <property type="match status" value="1"/>
</dbReference>
<dbReference type="SMART" id="SM00717">
    <property type="entry name" value="SANT"/>
    <property type="match status" value="1"/>
</dbReference>
<dbReference type="SUPFAM" id="SSF46689">
    <property type="entry name" value="Homeodomain-like"/>
    <property type="match status" value="2"/>
</dbReference>
<dbReference type="PROSITE" id="PS51293">
    <property type="entry name" value="SANT"/>
    <property type="match status" value="1"/>
</dbReference>
<dbReference type="PROSITE" id="PS50934">
    <property type="entry name" value="SWIRM"/>
    <property type="match status" value="1"/>
</dbReference>
<dbReference type="PROSITE" id="PS01357">
    <property type="entry name" value="ZF_ZZ_1"/>
    <property type="match status" value="1"/>
</dbReference>
<dbReference type="PROSITE" id="PS50135">
    <property type="entry name" value="ZF_ZZ_2"/>
    <property type="match status" value="1"/>
</dbReference>